<reference key="1">
    <citation type="journal article" date="2009" name="PLoS Genet.">
        <title>Organised genome dynamics in the Escherichia coli species results in highly diverse adaptive paths.</title>
        <authorList>
            <person name="Touchon M."/>
            <person name="Hoede C."/>
            <person name="Tenaillon O."/>
            <person name="Barbe V."/>
            <person name="Baeriswyl S."/>
            <person name="Bidet P."/>
            <person name="Bingen E."/>
            <person name="Bonacorsi S."/>
            <person name="Bouchier C."/>
            <person name="Bouvet O."/>
            <person name="Calteau A."/>
            <person name="Chiapello H."/>
            <person name="Clermont O."/>
            <person name="Cruveiller S."/>
            <person name="Danchin A."/>
            <person name="Diard M."/>
            <person name="Dossat C."/>
            <person name="Karoui M.E."/>
            <person name="Frapy E."/>
            <person name="Garry L."/>
            <person name="Ghigo J.M."/>
            <person name="Gilles A.M."/>
            <person name="Johnson J."/>
            <person name="Le Bouguenec C."/>
            <person name="Lescat M."/>
            <person name="Mangenot S."/>
            <person name="Martinez-Jehanne V."/>
            <person name="Matic I."/>
            <person name="Nassif X."/>
            <person name="Oztas S."/>
            <person name="Petit M.A."/>
            <person name="Pichon C."/>
            <person name="Rouy Z."/>
            <person name="Ruf C.S."/>
            <person name="Schneider D."/>
            <person name="Tourret J."/>
            <person name="Vacherie B."/>
            <person name="Vallenet D."/>
            <person name="Medigue C."/>
            <person name="Rocha E.P.C."/>
            <person name="Denamur E."/>
        </authorList>
    </citation>
    <scope>NUCLEOTIDE SEQUENCE [LARGE SCALE GENOMIC DNA]</scope>
    <source>
        <strain>UMN026 / ExPEC</strain>
    </source>
</reference>
<accession>B7NAU0</accession>
<feature type="chain" id="PRO_1000200798" description="Multidrug resistance protein MdtH">
    <location>
        <begin position="1"/>
        <end position="402"/>
    </location>
</feature>
<feature type="topological domain" description="Cytoplasmic" evidence="1">
    <location>
        <begin position="1"/>
        <end position="12"/>
    </location>
</feature>
<feature type="transmembrane region" description="Helical" evidence="1">
    <location>
        <begin position="13"/>
        <end position="33"/>
    </location>
</feature>
<feature type="topological domain" description="Periplasmic" evidence="1">
    <location>
        <begin position="34"/>
        <end position="98"/>
    </location>
</feature>
<feature type="transmembrane region" description="Helical" evidence="1">
    <location>
        <begin position="99"/>
        <end position="116"/>
    </location>
</feature>
<feature type="topological domain" description="Cytoplasmic" evidence="1">
    <location>
        <begin position="117"/>
        <end position="138"/>
    </location>
</feature>
<feature type="transmembrane region" description="Helical" evidence="1">
    <location>
        <begin position="139"/>
        <end position="159"/>
    </location>
</feature>
<feature type="topological domain" description="Periplasmic" evidence="1">
    <location>
        <begin position="160"/>
        <end position="164"/>
    </location>
</feature>
<feature type="transmembrane region" description="Helical" evidence="1">
    <location>
        <begin position="165"/>
        <end position="185"/>
    </location>
</feature>
<feature type="topological domain" description="Cytoplasmic" evidence="1">
    <location>
        <begin position="186"/>
        <end position="213"/>
    </location>
</feature>
<feature type="transmembrane region" description="Helical" evidence="1">
    <location>
        <begin position="214"/>
        <end position="234"/>
    </location>
</feature>
<feature type="topological domain" description="Periplasmic" evidence="1">
    <location>
        <begin position="235"/>
        <end position="243"/>
    </location>
</feature>
<feature type="transmembrane region" description="Helical" evidence="1">
    <location>
        <begin position="244"/>
        <end position="264"/>
    </location>
</feature>
<feature type="topological domain" description="Cytoplasmic" evidence="1">
    <location>
        <begin position="265"/>
        <end position="276"/>
    </location>
</feature>
<feature type="transmembrane region" description="Helical" evidence="1">
    <location>
        <begin position="277"/>
        <end position="297"/>
    </location>
</feature>
<feature type="topological domain" description="Periplasmic" evidence="1">
    <location>
        <begin position="298"/>
        <end position="299"/>
    </location>
</feature>
<feature type="transmembrane region" description="Helical" evidence="1">
    <location>
        <begin position="300"/>
        <end position="320"/>
    </location>
</feature>
<feature type="topological domain" description="Cytoplasmic" evidence="1">
    <location>
        <begin position="321"/>
        <end position="339"/>
    </location>
</feature>
<feature type="transmembrane region" description="Helical" evidence="1">
    <location>
        <begin position="340"/>
        <end position="360"/>
    </location>
</feature>
<feature type="topological domain" description="Periplasmic" evidence="1">
    <location>
        <begin position="361"/>
        <end position="367"/>
    </location>
</feature>
<feature type="transmembrane region" description="Helical" evidence="1">
    <location>
        <begin position="368"/>
        <end position="388"/>
    </location>
</feature>
<feature type="topological domain" description="Cytoplasmic" evidence="1">
    <location>
        <begin position="389"/>
        <end position="402"/>
    </location>
</feature>
<proteinExistence type="inferred from homology"/>
<sequence length="402" mass="44363">MSRVSQARNLGKYFLLIDNMLVVLGFFVVFPLISIRFVDQMGWAAVMVGIALGLRQFIQQGLGIFGGAIADRFGAKPMIVTGMLMRAAGFATMGIAHEPWLLWFSCLLSGLGGTLFDPPRSALVVKLIRPQQRGRFFSLLMMQDSAGAVIGALLGSWLLQYDFRLVCATGAVLFVLCAAFNAWLLPAWKLSTVRTPVREGMTRVMRDKRFVTYVLTLAGYYMLAVQVMLMLPIMVNDVAGAPSAVKWMYAIEACLSLTLLYPIARWSEKHFRLEHRLMAGLLIMSLSMMPVGMVSGLQQLFTLICLFYIGSIIAEPARETLSASLADARARGSYMGFSRLGLAIGGAIGYIGGGWLFDLGKSAHQPELPWMMLGIIGIFTFLALGWQFSQKRAARRLLERDA</sequence>
<evidence type="ECO:0000255" key="1">
    <source>
        <dbReference type="HAMAP-Rule" id="MF_01529"/>
    </source>
</evidence>
<organism>
    <name type="scientific">Escherichia coli O17:K52:H18 (strain UMN026 / ExPEC)</name>
    <dbReference type="NCBI Taxonomy" id="585056"/>
    <lineage>
        <taxon>Bacteria</taxon>
        <taxon>Pseudomonadati</taxon>
        <taxon>Pseudomonadota</taxon>
        <taxon>Gammaproteobacteria</taxon>
        <taxon>Enterobacterales</taxon>
        <taxon>Enterobacteriaceae</taxon>
        <taxon>Escherichia</taxon>
    </lineage>
</organism>
<name>MDTH_ECOLU</name>
<keyword id="KW-0046">Antibiotic resistance</keyword>
<keyword id="KW-0997">Cell inner membrane</keyword>
<keyword id="KW-1003">Cell membrane</keyword>
<keyword id="KW-0472">Membrane</keyword>
<keyword id="KW-0812">Transmembrane</keyword>
<keyword id="KW-1133">Transmembrane helix</keyword>
<keyword id="KW-0813">Transport</keyword>
<protein>
    <recommendedName>
        <fullName evidence="1">Multidrug resistance protein MdtH</fullName>
    </recommendedName>
</protein>
<gene>
    <name evidence="1" type="primary">mdtH</name>
    <name type="ordered locus">ECUMN_1239</name>
</gene>
<dbReference type="EMBL" id="CU928163">
    <property type="protein sequence ID" value="CAR12449.1"/>
    <property type="molecule type" value="Genomic_DNA"/>
</dbReference>
<dbReference type="RefSeq" id="WP_000092206.1">
    <property type="nucleotide sequence ID" value="NC_011751.1"/>
</dbReference>
<dbReference type="RefSeq" id="YP_002411992.1">
    <property type="nucleotide sequence ID" value="NC_011751.1"/>
</dbReference>
<dbReference type="SMR" id="B7NAU0"/>
<dbReference type="STRING" id="585056.ECUMN_1239"/>
<dbReference type="GeneID" id="75203652"/>
<dbReference type="KEGG" id="eum:ECUMN_1239"/>
<dbReference type="PATRIC" id="fig|585056.7.peg.1443"/>
<dbReference type="HOGENOM" id="CLU_001265_60_2_6"/>
<dbReference type="Proteomes" id="UP000007097">
    <property type="component" value="Chromosome"/>
</dbReference>
<dbReference type="GO" id="GO:0005886">
    <property type="term" value="C:plasma membrane"/>
    <property type="evidence" value="ECO:0007669"/>
    <property type="project" value="UniProtKB-SubCell"/>
</dbReference>
<dbReference type="GO" id="GO:0022857">
    <property type="term" value="F:transmembrane transporter activity"/>
    <property type="evidence" value="ECO:0007669"/>
    <property type="project" value="UniProtKB-UniRule"/>
</dbReference>
<dbReference type="GO" id="GO:0046677">
    <property type="term" value="P:response to antibiotic"/>
    <property type="evidence" value="ECO:0007669"/>
    <property type="project" value="UniProtKB-KW"/>
</dbReference>
<dbReference type="CDD" id="cd17329">
    <property type="entry name" value="MFS_MdtH_MDR_like"/>
    <property type="match status" value="1"/>
</dbReference>
<dbReference type="FunFam" id="1.20.1250.20:FF:000039">
    <property type="entry name" value="Multidrug resistance protein MdtH"/>
    <property type="match status" value="1"/>
</dbReference>
<dbReference type="Gene3D" id="1.20.1250.20">
    <property type="entry name" value="MFS general substrate transporter like domains"/>
    <property type="match status" value="1"/>
</dbReference>
<dbReference type="HAMAP" id="MF_01529">
    <property type="entry name" value="MFS_MdtH"/>
    <property type="match status" value="1"/>
</dbReference>
<dbReference type="InterPro" id="IPR011701">
    <property type="entry name" value="MFS"/>
</dbReference>
<dbReference type="InterPro" id="IPR020846">
    <property type="entry name" value="MFS_dom"/>
</dbReference>
<dbReference type="InterPro" id="IPR036259">
    <property type="entry name" value="MFS_trans_sf"/>
</dbReference>
<dbReference type="InterPro" id="IPR050171">
    <property type="entry name" value="MFS_Transporters"/>
</dbReference>
<dbReference type="InterPro" id="IPR022855">
    <property type="entry name" value="Multidrug-R_MdtH"/>
</dbReference>
<dbReference type="NCBIfam" id="NF008650">
    <property type="entry name" value="PRK11646.1"/>
    <property type="match status" value="1"/>
</dbReference>
<dbReference type="PANTHER" id="PTHR23517:SF2">
    <property type="entry name" value="MULTIDRUG RESISTANCE PROTEIN MDTH"/>
    <property type="match status" value="1"/>
</dbReference>
<dbReference type="PANTHER" id="PTHR23517">
    <property type="entry name" value="RESISTANCE PROTEIN MDTM, PUTATIVE-RELATED-RELATED"/>
    <property type="match status" value="1"/>
</dbReference>
<dbReference type="Pfam" id="PF07690">
    <property type="entry name" value="MFS_1"/>
    <property type="match status" value="1"/>
</dbReference>
<dbReference type="SUPFAM" id="SSF103473">
    <property type="entry name" value="MFS general substrate transporter"/>
    <property type="match status" value="1"/>
</dbReference>
<dbReference type="PROSITE" id="PS50850">
    <property type="entry name" value="MFS"/>
    <property type="match status" value="1"/>
</dbReference>
<comment type="function">
    <text evidence="1">Confers resistance to norfloxacin and enoxacin.</text>
</comment>
<comment type="subcellular location">
    <subcellularLocation>
        <location evidence="1">Cell inner membrane</location>
        <topology evidence="1">Multi-pass membrane protein</topology>
    </subcellularLocation>
</comment>
<comment type="similarity">
    <text evidence="1">Belongs to the major facilitator superfamily. DHA1 family. MdtH (TC 2.A.1.2.21) subfamily.</text>
</comment>